<feature type="chain" id="PRO_0000181817" description="tRNA(Ile)-lysidine synthase, chloroplastic">
    <location>
        <begin position="1"/>
        <end position="290"/>
    </location>
</feature>
<feature type="binding site" evidence="1">
    <location>
        <begin position="33"/>
        <end position="38"/>
    </location>
    <ligand>
        <name>ATP</name>
        <dbReference type="ChEBI" id="CHEBI:30616"/>
    </ligand>
</feature>
<evidence type="ECO:0000255" key="1">
    <source>
        <dbReference type="HAMAP-Rule" id="MF_01161"/>
    </source>
</evidence>
<dbReference type="EC" id="6.3.4.19" evidence="1"/>
<dbReference type="EMBL" id="AB002583">
    <property type="protein sequence ID" value="BAC76100.1"/>
    <property type="molecule type" value="Genomic_DNA"/>
</dbReference>
<dbReference type="RefSeq" id="NP_848938.1">
    <property type="nucleotide sequence ID" value="NC_004799.1"/>
</dbReference>
<dbReference type="SMR" id="Q85G85"/>
<dbReference type="STRING" id="280699.Q85G85"/>
<dbReference type="EnsemblPlants" id="CMV004CT">
    <property type="protein sequence ID" value="CMV004CT"/>
    <property type="gene ID" value="CMV004C"/>
</dbReference>
<dbReference type="GeneID" id="845089"/>
<dbReference type="Gramene" id="CMV004CT">
    <property type="protein sequence ID" value="CMV004CT"/>
    <property type="gene ID" value="CMV004C"/>
</dbReference>
<dbReference type="KEGG" id="cme:CymeCp006"/>
<dbReference type="HOGENOM" id="CLU_960935_0_0_1"/>
<dbReference type="Proteomes" id="UP000007014">
    <property type="component" value="Chloroplast"/>
</dbReference>
<dbReference type="GO" id="GO:0009507">
    <property type="term" value="C:chloroplast"/>
    <property type="evidence" value="ECO:0007669"/>
    <property type="project" value="UniProtKB-SubCell"/>
</dbReference>
<dbReference type="GO" id="GO:0005524">
    <property type="term" value="F:ATP binding"/>
    <property type="evidence" value="ECO:0007669"/>
    <property type="project" value="UniProtKB-UniRule"/>
</dbReference>
<dbReference type="GO" id="GO:0032267">
    <property type="term" value="F:tRNA(Ile)-lysidine synthase activity"/>
    <property type="evidence" value="ECO:0007669"/>
    <property type="project" value="UniProtKB-EC"/>
</dbReference>
<dbReference type="GO" id="GO:0006400">
    <property type="term" value="P:tRNA modification"/>
    <property type="evidence" value="ECO:0007669"/>
    <property type="project" value="UniProtKB-UniRule"/>
</dbReference>
<dbReference type="CDD" id="cd01992">
    <property type="entry name" value="TilS_N"/>
    <property type="match status" value="1"/>
</dbReference>
<dbReference type="Gene3D" id="3.40.50.620">
    <property type="entry name" value="HUPs"/>
    <property type="match status" value="1"/>
</dbReference>
<dbReference type="HAMAP" id="MF_01161">
    <property type="entry name" value="tRNA_Ile_lys_synt"/>
    <property type="match status" value="1"/>
</dbReference>
<dbReference type="InterPro" id="IPR014729">
    <property type="entry name" value="Rossmann-like_a/b/a_fold"/>
</dbReference>
<dbReference type="InterPro" id="IPR011063">
    <property type="entry name" value="TilS/TtcA_N"/>
</dbReference>
<dbReference type="InterPro" id="IPR012094">
    <property type="entry name" value="tRNA_Ile_lys_synt"/>
</dbReference>
<dbReference type="InterPro" id="IPR012795">
    <property type="entry name" value="tRNA_Ile_lys_synt_N"/>
</dbReference>
<dbReference type="NCBIfam" id="TIGR02432">
    <property type="entry name" value="lysidine_TilS_N"/>
    <property type="match status" value="1"/>
</dbReference>
<dbReference type="PANTHER" id="PTHR43033">
    <property type="entry name" value="TRNA(ILE)-LYSIDINE SYNTHASE-RELATED"/>
    <property type="match status" value="1"/>
</dbReference>
<dbReference type="PANTHER" id="PTHR43033:SF1">
    <property type="entry name" value="TRNA(ILE)-LYSIDINE SYNTHASE-RELATED"/>
    <property type="match status" value="1"/>
</dbReference>
<dbReference type="Pfam" id="PF01171">
    <property type="entry name" value="ATP_bind_3"/>
    <property type="match status" value="1"/>
</dbReference>
<dbReference type="SUPFAM" id="SSF52402">
    <property type="entry name" value="Adenine nucleotide alpha hydrolases-like"/>
    <property type="match status" value="1"/>
</dbReference>
<geneLocation type="chloroplast"/>
<sequence length="290" mass="34557">MYTPMHNKFQNRFQLANLTHSHSFSHSWLLAISGGQDSLCLLKFMHDLVHHHLVVVHFDHRWSCSLAALRVYYLSRYMHLAWRYFRTALPITTEQDARQYRYANLIQLLYQTHSHAICTAHTASDDLETYLDQWISLRHPEGIWRLCHLSGSQILFRPLLHLTRAQTHWFTLVHYLPIWSDVSNYQITFKRNQLRHQLIPFLKNLNPRFHTTLSARLSARILSPLIVYPWHVWSSLPIWLQYQIATQWGLTLSQIQQLIYNNKYELARSSSINRFSFCDSSRSYHFNLAL</sequence>
<keyword id="KW-0067">ATP-binding</keyword>
<keyword id="KW-0150">Chloroplast</keyword>
<keyword id="KW-0436">Ligase</keyword>
<keyword id="KW-0547">Nucleotide-binding</keyword>
<keyword id="KW-0934">Plastid</keyword>
<keyword id="KW-1185">Reference proteome</keyword>
<keyword id="KW-0819">tRNA processing</keyword>
<proteinExistence type="inferred from homology"/>
<accession>Q85G85</accession>
<organism>
    <name type="scientific">Cyanidioschyzon merolae (strain NIES-3377 / 10D)</name>
    <name type="common">Unicellular red alga</name>
    <dbReference type="NCBI Taxonomy" id="280699"/>
    <lineage>
        <taxon>Eukaryota</taxon>
        <taxon>Rhodophyta</taxon>
        <taxon>Bangiophyceae</taxon>
        <taxon>Cyanidiales</taxon>
        <taxon>Cyanidiaceae</taxon>
        <taxon>Cyanidioschyzon</taxon>
    </lineage>
</organism>
<protein>
    <recommendedName>
        <fullName evidence="1">tRNA(Ile)-lysidine synthase, chloroplastic</fullName>
        <ecNumber evidence="1">6.3.4.19</ecNumber>
    </recommendedName>
    <alternativeName>
        <fullName evidence="1">tRNA(Ile)-2-lysyl-cytidine synthase</fullName>
    </alternativeName>
    <alternativeName>
        <fullName evidence="1">tRNA(Ile)-lysidine synthetase</fullName>
    </alternativeName>
</protein>
<gene>
    <name evidence="1" type="primary">tilS</name>
    <name type="synonym">ycf62</name>
</gene>
<reference key="1">
    <citation type="journal article" date="2003" name="DNA Res.">
        <title>Complete sequence and analysis of the plastid genome of the unicellular red alga Cyanidioschyzon merolae.</title>
        <authorList>
            <person name="Ohta N."/>
            <person name="Matsuzaki M."/>
            <person name="Misumi O."/>
            <person name="Miyagishima S.-Y."/>
            <person name="Nozaki H."/>
            <person name="Tanaka K."/>
            <person name="Shin-i T."/>
            <person name="Kohara Y."/>
            <person name="Kuroiwa T."/>
        </authorList>
    </citation>
    <scope>NUCLEOTIDE SEQUENCE [LARGE SCALE GENOMIC DNA]</scope>
    <source>
        <strain>NIES-3377 / 10D</strain>
    </source>
</reference>
<name>TILS_CYAM1</name>
<comment type="function">
    <text evidence="1">Ligates lysine onto the cytidine present at position 34 of the AUA codon-specific tRNA(Ile) that contains the anticodon CAU, in an ATP-dependent manner. Cytidine is converted to lysidine, thus changing the amino acid specificity of the tRNA from methionine to isoleucine.</text>
</comment>
<comment type="catalytic activity">
    <reaction evidence="1">
        <text>cytidine(34) in tRNA(Ile2) + L-lysine + ATP = lysidine(34) in tRNA(Ile2) + AMP + diphosphate + H(+)</text>
        <dbReference type="Rhea" id="RHEA:43744"/>
        <dbReference type="Rhea" id="RHEA-COMP:10625"/>
        <dbReference type="Rhea" id="RHEA-COMP:10670"/>
        <dbReference type="ChEBI" id="CHEBI:15378"/>
        <dbReference type="ChEBI" id="CHEBI:30616"/>
        <dbReference type="ChEBI" id="CHEBI:32551"/>
        <dbReference type="ChEBI" id="CHEBI:33019"/>
        <dbReference type="ChEBI" id="CHEBI:82748"/>
        <dbReference type="ChEBI" id="CHEBI:83665"/>
        <dbReference type="ChEBI" id="CHEBI:456215"/>
        <dbReference type="EC" id="6.3.4.19"/>
    </reaction>
</comment>
<comment type="subcellular location">
    <subcellularLocation>
        <location>Plastid</location>
        <location>Chloroplast</location>
    </subcellularLocation>
</comment>
<comment type="domain">
    <text>The N-terminal region contains the highly conserved SGGXDS motif, predicted to be a P-loop motif involved in ATP binding.</text>
</comment>
<comment type="similarity">
    <text evidence="1">Belongs to the tRNA(Ile)-lysidine synthase family.</text>
</comment>